<proteinExistence type="evidence at protein level"/>
<evidence type="ECO:0000250" key="1">
    <source>
        <dbReference type="UniProtKB" id="A0A1D5PXA5"/>
    </source>
</evidence>
<evidence type="ECO:0000250" key="2">
    <source>
        <dbReference type="UniProtKB" id="O35433"/>
    </source>
</evidence>
<evidence type="ECO:0000250" key="3">
    <source>
        <dbReference type="UniProtKB" id="Q9EPK8"/>
    </source>
</evidence>
<evidence type="ECO:0000250" key="4">
    <source>
        <dbReference type="UniProtKB" id="Q9HBA0"/>
    </source>
</evidence>
<evidence type="ECO:0000250" key="5">
    <source>
        <dbReference type="UniProtKB" id="Q9R186"/>
    </source>
</evidence>
<evidence type="ECO:0000256" key="6">
    <source>
        <dbReference type="SAM" id="MobiDB-lite"/>
    </source>
</evidence>
<evidence type="ECO:0000269" key="7">
    <source>
    </source>
</evidence>
<evidence type="ECO:0000269" key="8">
    <source>
    </source>
</evidence>
<evidence type="ECO:0000303" key="9">
    <source>
    </source>
</evidence>
<evidence type="ECO:0000305" key="10"/>
<evidence type="ECO:0000305" key="11">
    <source>
    </source>
</evidence>
<comment type="function">
    <text evidence="3 4 7">Non-selective calcium permeant cation channel involved in osmotic sensitivity and mechanosensitivity (PubMed:11081638). Activation by exposure to hypotonicity within the physiological range exhibits an outward rectification (PubMed:11081638). Also activated by heat, low pH, citrate and phorbol esters (By similarity). Increase of intracellular Ca(2+) potentiates currents (By similarity). Channel activity seems to be regulated by a calmodulin-dependent mechanism with a negative feedback mechanism (By similarity). Acts as a regulator of intracellular Ca(2+) in synoviocytes (By similarity). Plays an obligatory role as a molecular component in the nonselective cation channel activation induced by 4-alpha-phorbol 12,13-didecanoate and hypotonic stimulation in synoviocytes and also regulates production of IL-8 (By similarity). Together with PKD2, forms mechano- and thermosensitive channels in cilium (By similarity). Promotes cell-cell junction formation in skin keratinocytes and plays an important role in the formation and/or maintenance of functional intercellular barriers (By similarity). Negatively regulates expression of PPARGC1A, UCP1, oxidative metabolism and respiration in adipocytes (By similarity). Regulates expression of chemokines and cytokines related to pro-inflammatory pathway in adipocytes (By similarity). Together with AQP5, controls regulatory volume decrease in salivary epithelial cells (By similarity). Required for normal development and maintenance of bone and cartilage (By similarity). In its inactive state, may sequester DDX3X at the plasma membrane. When activated, the interaction between both proteins is affected and DDX3X relocalizes to the nucleus (By similarity). In neurons of the central nervous system, could play a role in triggering voluntary water intake in response to increased sodium concentration in body fluid (By similarity).</text>
</comment>
<comment type="catalytic activity">
    <reaction evidence="7">
        <text>Ca(2+)(in) = Ca(2+)(out)</text>
        <dbReference type="Rhea" id="RHEA:29671"/>
        <dbReference type="ChEBI" id="CHEBI:29108"/>
    </reaction>
</comment>
<comment type="subunit">
    <text evidence="3 4 8">Homotetramer. Interacts with calmodulin (By similarity). Interacts with MAP7 and Src family Tyr protein kinases LYN, SRC, FYN, HCK, LCK and YES (By similarity). Interacts with CTNNB1 (By similarity). The TRPV4 and CTNNB1 complex can interact with CDH1 (By similarity). Part of a complex containing MLC1, AQP4, HEPACAM and ATP1B1 (By similarity). Interacts with PACSIN1, PACSIN2 and PACSIN3 (via SH3 domain) (PubMed:16627472). Interacts with ITPR3 (By similarity). Interacts with AQP5; the interaction is probably indirect and regulates TRPV4 activation by hypotonicity (By similarity). Interacts with ANO1 (By similarity). Interacts (via C-terminus) with PKD2 (via C-terminus) (By similarity). Interacts with DDX3X; this interaction is decreased when the channel is activated (By similarity).</text>
</comment>
<comment type="interaction">
    <interactant intactId="EBI-10095418">
        <id>Q9ERZ8</id>
    </interactant>
    <interactant intactId="EBI-15907593">
        <id>P47863</id>
        <label>Aqp4</label>
    </interactant>
    <organismsDiffer>false</organismsDiffer>
    <experiments>4</experiments>
</comment>
<comment type="interaction">
    <interactant intactId="EBI-10095418">
        <id>Q9ERZ8</id>
    </interactant>
    <interactant intactId="EBI-15907676">
        <id>P47863-1</id>
        <label>Aqp4</label>
    </interactant>
    <organismsDiffer>false</organismsDiffer>
    <experiments>2</experiments>
</comment>
<comment type="subcellular location">
    <subcellularLocation>
        <location evidence="4">Cell membrane</location>
    </subcellularLocation>
    <subcellularLocation>
        <location evidence="11">Apical cell membrane</location>
        <topology evidence="4">Multi-pass membrane protein</topology>
    </subcellularLocation>
    <subcellularLocation>
        <location evidence="3">Cell junction</location>
        <location evidence="3">Adherens junction</location>
    </subcellularLocation>
    <subcellularLocation>
        <location evidence="4">Cell projection</location>
        <location evidence="4">Cilium</location>
    </subcellularLocation>
    <text evidence="4">Assembly of the putative homotetramer occurs primarily in the endoplasmic reticulum. Localization to the cell membrane is inhibited by WNK kinases (WNK1, WNK2, WNK3 or WNK4) in a kinase-independent mechanism.</text>
</comment>
<comment type="tissue specificity">
    <text evidence="7">Expressed lung, spleen, kidney, testis, fat, and at very low levels in trigeminal ganglia.</text>
</comment>
<comment type="domain">
    <text evidence="1">The ANK repeat region mediates interaction with Ca(2+)-calmodulin and ATP binding. The ANK repeat region mediates interaction with phosphatidylinositol-4,5-bisphosphate and related phosphatidylinositides.</text>
</comment>
<comment type="PTM">
    <text evidence="3">N-glycosylated.</text>
</comment>
<comment type="similarity">
    <text evidence="10">Belongs to the transient receptor (TC 1.A.4) family. TrpV subfamily. TRPV4 sub-subfamily.</text>
</comment>
<dbReference type="EMBL" id="AF263521">
    <property type="protein sequence ID" value="AAG28027.1"/>
    <property type="molecule type" value="mRNA"/>
</dbReference>
<dbReference type="RefSeq" id="NP_076460.1">
    <property type="nucleotide sequence ID" value="NM_023970.1"/>
</dbReference>
<dbReference type="RefSeq" id="XP_006249528.1">
    <property type="nucleotide sequence ID" value="XM_006249466.3"/>
</dbReference>
<dbReference type="EMDB" id="EMD-23477"/>
<dbReference type="SMR" id="Q9ERZ8"/>
<dbReference type="BioGRID" id="249353">
    <property type="interactions" value="2"/>
</dbReference>
<dbReference type="DIP" id="DIP-59600N"/>
<dbReference type="FunCoup" id="Q9ERZ8">
    <property type="interactions" value="49"/>
</dbReference>
<dbReference type="IntAct" id="Q9ERZ8">
    <property type="interactions" value="3"/>
</dbReference>
<dbReference type="STRING" id="10116.ENSRNOP00000001586"/>
<dbReference type="BindingDB" id="Q9ERZ8"/>
<dbReference type="ChEMBL" id="CHEMBL2775"/>
<dbReference type="DrugCentral" id="Q9ERZ8"/>
<dbReference type="GuidetoPHARMACOLOGY" id="510"/>
<dbReference type="TCDB" id="1.A.4.2.5">
    <property type="family name" value="the transient receptor potential ca2+/cation channel (trp-cc) family"/>
</dbReference>
<dbReference type="iPTMnet" id="Q9ERZ8"/>
<dbReference type="PhosphoSitePlus" id="Q9ERZ8"/>
<dbReference type="PaxDb" id="10116-ENSRNOP00000001586"/>
<dbReference type="Ensembl" id="ENSRNOT00000001586.3">
    <property type="protein sequence ID" value="ENSRNOP00000001586.1"/>
    <property type="gene ID" value="ENSRNOG00000001195.3"/>
</dbReference>
<dbReference type="GeneID" id="66026"/>
<dbReference type="KEGG" id="rno:66026"/>
<dbReference type="UCSC" id="RGD:69337">
    <property type="organism name" value="rat"/>
</dbReference>
<dbReference type="AGR" id="RGD:69337"/>
<dbReference type="CTD" id="59341"/>
<dbReference type="RGD" id="69337">
    <property type="gene designation" value="Trpv4"/>
</dbReference>
<dbReference type="eggNOG" id="KOG3676">
    <property type="taxonomic scope" value="Eukaryota"/>
</dbReference>
<dbReference type="GeneTree" id="ENSGT00940000158615"/>
<dbReference type="HOGENOM" id="CLU_012795_1_0_1"/>
<dbReference type="InParanoid" id="Q9ERZ8"/>
<dbReference type="OMA" id="MIHSALY"/>
<dbReference type="OrthoDB" id="533508at2759"/>
<dbReference type="PhylomeDB" id="Q9ERZ8"/>
<dbReference type="TreeFam" id="TF314711"/>
<dbReference type="Reactome" id="R-RNO-3295583">
    <property type="pathway name" value="TRP channels"/>
</dbReference>
<dbReference type="Reactome" id="R-RNO-9856530">
    <property type="pathway name" value="High laminar flow shear stress activates signaling by PIEZO1 and PECAM1:CDH5:KDR in endothelial cells"/>
</dbReference>
<dbReference type="PRO" id="PR:Q9ERZ8"/>
<dbReference type="Proteomes" id="UP000002494">
    <property type="component" value="Chromosome 12"/>
</dbReference>
<dbReference type="Bgee" id="ENSRNOG00000001195">
    <property type="expression patterns" value="Expressed in adult mammalian kidney and 15 other cell types or tissues"/>
</dbReference>
<dbReference type="GO" id="GO:0005912">
    <property type="term" value="C:adherens junction"/>
    <property type="evidence" value="ECO:0000250"/>
    <property type="project" value="UniProtKB"/>
</dbReference>
<dbReference type="GO" id="GO:0016324">
    <property type="term" value="C:apical plasma membrane"/>
    <property type="evidence" value="ECO:0000266"/>
    <property type="project" value="RGD"/>
</dbReference>
<dbReference type="GO" id="GO:0009986">
    <property type="term" value="C:cell surface"/>
    <property type="evidence" value="ECO:0000314"/>
    <property type="project" value="RGD"/>
</dbReference>
<dbReference type="GO" id="GO:0005929">
    <property type="term" value="C:cilium"/>
    <property type="evidence" value="ECO:0000266"/>
    <property type="project" value="RGD"/>
</dbReference>
<dbReference type="GO" id="GO:0030864">
    <property type="term" value="C:cortical actin cytoskeleton"/>
    <property type="evidence" value="ECO:0000314"/>
    <property type="project" value="BHF-UCL"/>
</dbReference>
<dbReference type="GO" id="GO:0030175">
    <property type="term" value="C:filopodium"/>
    <property type="evidence" value="ECO:0000314"/>
    <property type="project" value="BHF-UCL"/>
</dbReference>
<dbReference type="GO" id="GO:0005925">
    <property type="term" value="C:focal adhesion"/>
    <property type="evidence" value="ECO:0000314"/>
    <property type="project" value="BHF-UCL"/>
</dbReference>
<dbReference type="GO" id="GO:0030426">
    <property type="term" value="C:growth cone"/>
    <property type="evidence" value="ECO:0000314"/>
    <property type="project" value="BHF-UCL"/>
</dbReference>
<dbReference type="GO" id="GO:0030027">
    <property type="term" value="C:lamellipodium"/>
    <property type="evidence" value="ECO:0000314"/>
    <property type="project" value="BHF-UCL"/>
</dbReference>
<dbReference type="GO" id="GO:0005886">
    <property type="term" value="C:plasma membrane"/>
    <property type="evidence" value="ECO:0000250"/>
    <property type="project" value="UniProtKB"/>
</dbReference>
<dbReference type="GO" id="GO:0032587">
    <property type="term" value="C:ruffle membrane"/>
    <property type="evidence" value="ECO:0000314"/>
    <property type="project" value="BHF-UCL"/>
</dbReference>
<dbReference type="GO" id="GO:0003779">
    <property type="term" value="F:actin binding"/>
    <property type="evidence" value="ECO:0000314"/>
    <property type="project" value="BHF-UCL"/>
</dbReference>
<dbReference type="GO" id="GO:0051015">
    <property type="term" value="F:actin filament binding"/>
    <property type="evidence" value="ECO:0000314"/>
    <property type="project" value="BHF-UCL"/>
</dbReference>
<dbReference type="GO" id="GO:0043014">
    <property type="term" value="F:alpha-tubulin binding"/>
    <property type="evidence" value="ECO:0000314"/>
    <property type="project" value="BHF-UCL"/>
</dbReference>
<dbReference type="GO" id="GO:0005524">
    <property type="term" value="F:ATP binding"/>
    <property type="evidence" value="ECO:0007669"/>
    <property type="project" value="UniProtKB-KW"/>
</dbReference>
<dbReference type="GO" id="GO:0048487">
    <property type="term" value="F:beta-tubulin binding"/>
    <property type="evidence" value="ECO:0000314"/>
    <property type="project" value="BHF-UCL"/>
</dbReference>
<dbReference type="GO" id="GO:0005262">
    <property type="term" value="F:calcium channel activity"/>
    <property type="evidence" value="ECO:0000314"/>
    <property type="project" value="BHF-UCL"/>
</dbReference>
<dbReference type="GO" id="GO:0005516">
    <property type="term" value="F:calmodulin binding"/>
    <property type="evidence" value="ECO:0000250"/>
    <property type="project" value="UniProtKB"/>
</dbReference>
<dbReference type="GO" id="GO:0042802">
    <property type="term" value="F:identical protein binding"/>
    <property type="evidence" value="ECO:0000266"/>
    <property type="project" value="RGD"/>
</dbReference>
<dbReference type="GO" id="GO:0008289">
    <property type="term" value="F:lipid binding"/>
    <property type="evidence" value="ECO:0007669"/>
    <property type="project" value="UniProtKB-KW"/>
</dbReference>
<dbReference type="GO" id="GO:0046872">
    <property type="term" value="F:metal ion binding"/>
    <property type="evidence" value="ECO:0007669"/>
    <property type="project" value="UniProtKB-KW"/>
</dbReference>
<dbReference type="GO" id="GO:0008017">
    <property type="term" value="F:microtubule binding"/>
    <property type="evidence" value="ECO:0000314"/>
    <property type="project" value="BHF-UCL"/>
</dbReference>
<dbReference type="GO" id="GO:0005261">
    <property type="term" value="F:monoatomic cation channel activity"/>
    <property type="evidence" value="ECO:0000314"/>
    <property type="project" value="RGD"/>
</dbReference>
<dbReference type="GO" id="GO:0005034">
    <property type="term" value="F:osmosensor activity"/>
    <property type="evidence" value="ECO:0000266"/>
    <property type="project" value="RGD"/>
</dbReference>
<dbReference type="GO" id="GO:0019901">
    <property type="term" value="F:protein kinase binding"/>
    <property type="evidence" value="ECO:0000266"/>
    <property type="project" value="RGD"/>
</dbReference>
<dbReference type="GO" id="GO:0005080">
    <property type="term" value="F:protein kinase C binding"/>
    <property type="evidence" value="ECO:0000314"/>
    <property type="project" value="BHF-UCL"/>
</dbReference>
<dbReference type="GO" id="GO:0042169">
    <property type="term" value="F:SH2 domain binding"/>
    <property type="evidence" value="ECO:0000266"/>
    <property type="project" value="RGD"/>
</dbReference>
<dbReference type="GO" id="GO:0015275">
    <property type="term" value="F:stretch-activated, monoatomic cation-selective, calcium channel activity"/>
    <property type="evidence" value="ECO:0000266"/>
    <property type="project" value="RGD"/>
</dbReference>
<dbReference type="GO" id="GO:0030036">
    <property type="term" value="P:actin cytoskeleton organization"/>
    <property type="evidence" value="ECO:0000314"/>
    <property type="project" value="BHF-UCL"/>
</dbReference>
<dbReference type="GO" id="GO:0007015">
    <property type="term" value="P:actin filament organization"/>
    <property type="evidence" value="ECO:0000314"/>
    <property type="project" value="BHF-UCL"/>
</dbReference>
<dbReference type="GO" id="GO:1904669">
    <property type="term" value="P:ATP export"/>
    <property type="evidence" value="ECO:0000266"/>
    <property type="project" value="RGD"/>
</dbReference>
<dbReference type="GO" id="GO:0015867">
    <property type="term" value="P:ATP transport"/>
    <property type="evidence" value="ECO:0000266"/>
    <property type="project" value="RGD"/>
</dbReference>
<dbReference type="GO" id="GO:0097497">
    <property type="term" value="P:blood vessel endothelial cell delamination"/>
    <property type="evidence" value="ECO:0000266"/>
    <property type="project" value="RGD"/>
</dbReference>
<dbReference type="GO" id="GO:0070509">
    <property type="term" value="P:calcium ion import"/>
    <property type="evidence" value="ECO:0000314"/>
    <property type="project" value="BHF-UCL"/>
</dbReference>
<dbReference type="GO" id="GO:0098703">
    <property type="term" value="P:calcium ion import across plasma membrane"/>
    <property type="evidence" value="ECO:0000266"/>
    <property type="project" value="RGD"/>
</dbReference>
<dbReference type="GO" id="GO:1902656">
    <property type="term" value="P:calcium ion import into cytosol"/>
    <property type="evidence" value="ECO:0000250"/>
    <property type="project" value="UniProtKB"/>
</dbReference>
<dbReference type="GO" id="GO:0070588">
    <property type="term" value="P:calcium ion transmembrane transport"/>
    <property type="evidence" value="ECO:0000315"/>
    <property type="project" value="UniProtKB"/>
</dbReference>
<dbReference type="GO" id="GO:0006816">
    <property type="term" value="P:calcium ion transport"/>
    <property type="evidence" value="ECO:0000266"/>
    <property type="project" value="RGD"/>
</dbReference>
<dbReference type="GO" id="GO:0060351">
    <property type="term" value="P:cartilage development involved in endochondral bone morphogenesis"/>
    <property type="evidence" value="ECO:0000266"/>
    <property type="project" value="RGD"/>
</dbReference>
<dbReference type="GO" id="GO:1990079">
    <property type="term" value="P:cartilage homeostasis"/>
    <property type="evidence" value="ECO:0000266"/>
    <property type="project" value="RGD"/>
</dbReference>
<dbReference type="GO" id="GO:0007043">
    <property type="term" value="P:cell-cell junction assembly"/>
    <property type="evidence" value="ECO:0000250"/>
    <property type="project" value="UniProtKB"/>
</dbReference>
<dbReference type="GO" id="GO:0071476">
    <property type="term" value="P:cellular hypotonic response"/>
    <property type="evidence" value="ECO:0000266"/>
    <property type="project" value="RGD"/>
</dbReference>
<dbReference type="GO" id="GO:0071477">
    <property type="term" value="P:cellular hypotonic salinity response"/>
    <property type="evidence" value="ECO:0000266"/>
    <property type="project" value="RGD"/>
</dbReference>
<dbReference type="GO" id="GO:0034605">
    <property type="term" value="P:cellular response to heat"/>
    <property type="evidence" value="ECO:0000250"/>
    <property type="project" value="UniProtKB"/>
</dbReference>
<dbReference type="GO" id="GO:0071470">
    <property type="term" value="P:cellular response to osmotic stress"/>
    <property type="evidence" value="ECO:0000250"/>
    <property type="project" value="UniProtKB"/>
</dbReference>
<dbReference type="GO" id="GO:0043622">
    <property type="term" value="P:cortical microtubule organization"/>
    <property type="evidence" value="ECO:0000314"/>
    <property type="project" value="BHF-UCL"/>
</dbReference>
<dbReference type="GO" id="GO:0002024">
    <property type="term" value="P:diet induced thermogenesis"/>
    <property type="evidence" value="ECO:0000266"/>
    <property type="project" value="RGD"/>
</dbReference>
<dbReference type="GO" id="GO:0097009">
    <property type="term" value="P:energy homeostasis"/>
    <property type="evidence" value="ECO:0000266"/>
    <property type="project" value="RGD"/>
</dbReference>
<dbReference type="GO" id="GO:0042593">
    <property type="term" value="P:glucose homeostasis"/>
    <property type="evidence" value="ECO:0000266"/>
    <property type="project" value="RGD"/>
</dbReference>
<dbReference type="GO" id="GO:0042538">
    <property type="term" value="P:hyperosmotic salinity response"/>
    <property type="evidence" value="ECO:0000266"/>
    <property type="project" value="RGD"/>
</dbReference>
<dbReference type="GO" id="GO:0006971">
    <property type="term" value="P:hypotonic response"/>
    <property type="evidence" value="ECO:0000314"/>
    <property type="project" value="RGD"/>
</dbReference>
<dbReference type="GO" id="GO:0006874">
    <property type="term" value="P:intracellular calcium ion homeostasis"/>
    <property type="evidence" value="ECO:0000250"/>
    <property type="project" value="UniProtKB"/>
</dbReference>
<dbReference type="GO" id="GO:0046785">
    <property type="term" value="P:microtubule polymerization"/>
    <property type="evidence" value="ECO:0000314"/>
    <property type="project" value="BHF-UCL"/>
</dbReference>
<dbReference type="GO" id="GO:0050891">
    <property type="term" value="P:multicellular organismal-level water homeostasis"/>
    <property type="evidence" value="ECO:0000315"/>
    <property type="project" value="UniProtKB"/>
</dbReference>
<dbReference type="GO" id="GO:1903444">
    <property type="term" value="P:negative regulation of brown fat cell differentiation"/>
    <property type="evidence" value="ECO:0000266"/>
    <property type="project" value="RGD"/>
</dbReference>
<dbReference type="GO" id="GO:0045794">
    <property type="term" value="P:negative regulation of cell volume"/>
    <property type="evidence" value="ECO:0000266"/>
    <property type="project" value="RGD"/>
</dbReference>
<dbReference type="GO" id="GO:0010977">
    <property type="term" value="P:negative regulation of neuron projection development"/>
    <property type="evidence" value="ECO:0000314"/>
    <property type="project" value="BHF-UCL"/>
</dbReference>
<dbReference type="GO" id="GO:0000122">
    <property type="term" value="P:negative regulation of transcription by RNA polymerase II"/>
    <property type="evidence" value="ECO:0000266"/>
    <property type="project" value="RGD"/>
</dbReference>
<dbReference type="GO" id="GO:0007231">
    <property type="term" value="P:osmosensory signaling pathway"/>
    <property type="evidence" value="ECO:0000266"/>
    <property type="project" value="RGD"/>
</dbReference>
<dbReference type="GO" id="GO:0071651">
    <property type="term" value="P:positive regulation of chemokine (C-C motif) ligand 5 production"/>
    <property type="evidence" value="ECO:0000266"/>
    <property type="project" value="RGD"/>
</dbReference>
<dbReference type="GO" id="GO:2000340">
    <property type="term" value="P:positive regulation of chemokine (C-X-C motif) ligand 1 production"/>
    <property type="evidence" value="ECO:0000266"/>
    <property type="project" value="RGD"/>
</dbReference>
<dbReference type="GO" id="GO:0007204">
    <property type="term" value="P:positive regulation of cytosolic calcium ion concentration"/>
    <property type="evidence" value="ECO:0000314"/>
    <property type="project" value="RGD"/>
</dbReference>
<dbReference type="GO" id="GO:0070374">
    <property type="term" value="P:positive regulation of ERK1 and ERK2 cascade"/>
    <property type="evidence" value="ECO:0000266"/>
    <property type="project" value="RGD"/>
</dbReference>
<dbReference type="GO" id="GO:0010628">
    <property type="term" value="P:positive regulation of gene expression"/>
    <property type="evidence" value="ECO:0000266"/>
    <property type="project" value="RGD"/>
</dbReference>
<dbReference type="GO" id="GO:0050729">
    <property type="term" value="P:positive regulation of inflammatory response"/>
    <property type="evidence" value="ECO:0000266"/>
    <property type="project" value="RGD"/>
</dbReference>
<dbReference type="GO" id="GO:0032755">
    <property type="term" value="P:positive regulation of interleukin-6 production"/>
    <property type="evidence" value="ECO:0000266"/>
    <property type="project" value="RGD"/>
</dbReference>
<dbReference type="GO" id="GO:0090316">
    <property type="term" value="P:positive regulation of intracellular protein transport"/>
    <property type="evidence" value="ECO:0000266"/>
    <property type="project" value="RGD"/>
</dbReference>
<dbReference type="GO" id="GO:0046330">
    <property type="term" value="P:positive regulation of JNK cascade"/>
    <property type="evidence" value="ECO:0000266"/>
    <property type="project" value="RGD"/>
</dbReference>
<dbReference type="GO" id="GO:0010759">
    <property type="term" value="P:positive regulation of macrophage chemotaxis"/>
    <property type="evidence" value="ECO:0000266"/>
    <property type="project" value="RGD"/>
</dbReference>
<dbReference type="GO" id="GO:0071642">
    <property type="term" value="P:positive regulation of macrophage inflammatory protein 1 alpha production"/>
    <property type="evidence" value="ECO:0000266"/>
    <property type="project" value="RGD"/>
</dbReference>
<dbReference type="GO" id="GO:1902632">
    <property type="term" value="P:positive regulation of membrane hyperpolarization"/>
    <property type="evidence" value="ECO:0000266"/>
    <property type="project" value="RGD"/>
</dbReference>
<dbReference type="GO" id="GO:0031117">
    <property type="term" value="P:positive regulation of microtubule depolymerization"/>
    <property type="evidence" value="ECO:0000314"/>
    <property type="project" value="BHF-UCL"/>
</dbReference>
<dbReference type="GO" id="GO:0071639">
    <property type="term" value="P:positive regulation of monocyte chemotactic protein-1 production"/>
    <property type="evidence" value="ECO:0000266"/>
    <property type="project" value="RGD"/>
</dbReference>
<dbReference type="GO" id="GO:0032308">
    <property type="term" value="P:positive regulation of prostaglandin secretion"/>
    <property type="evidence" value="ECO:0000266"/>
    <property type="project" value="RGD"/>
</dbReference>
<dbReference type="GO" id="GO:0045989">
    <property type="term" value="P:positive regulation of striated muscle contraction"/>
    <property type="evidence" value="ECO:0000315"/>
    <property type="project" value="RGD"/>
</dbReference>
<dbReference type="GO" id="GO:0043117">
    <property type="term" value="P:positive regulation of vascular permeability"/>
    <property type="evidence" value="ECO:0000315"/>
    <property type="project" value="UniProtKB"/>
</dbReference>
<dbReference type="GO" id="GO:1903715">
    <property type="term" value="P:regulation of aerobic respiration"/>
    <property type="evidence" value="ECO:0000266"/>
    <property type="project" value="RGD"/>
</dbReference>
<dbReference type="GO" id="GO:0047484">
    <property type="term" value="P:regulation of response to osmotic stress"/>
    <property type="evidence" value="ECO:0000266"/>
    <property type="project" value="RGD"/>
</dbReference>
<dbReference type="GO" id="GO:0060087">
    <property type="term" value="P:relaxation of vascular associated smooth muscle"/>
    <property type="evidence" value="ECO:0000266"/>
    <property type="project" value="RGD"/>
</dbReference>
<dbReference type="GO" id="GO:0001666">
    <property type="term" value="P:response to hypoxia"/>
    <property type="evidence" value="ECO:0000270"/>
    <property type="project" value="RGD"/>
</dbReference>
<dbReference type="GO" id="GO:0032868">
    <property type="term" value="P:response to insulin"/>
    <property type="evidence" value="ECO:0000266"/>
    <property type="project" value="RGD"/>
</dbReference>
<dbReference type="GO" id="GO:0006970">
    <property type="term" value="P:response to osmotic stress"/>
    <property type="evidence" value="ECO:0000266"/>
    <property type="project" value="RGD"/>
</dbReference>
<dbReference type="GO" id="GO:0030103">
    <property type="term" value="P:vasopressin secretion"/>
    <property type="evidence" value="ECO:0000266"/>
    <property type="project" value="RGD"/>
</dbReference>
<dbReference type="CDD" id="cd22195">
    <property type="entry name" value="TRPV4"/>
    <property type="match status" value="1"/>
</dbReference>
<dbReference type="FunFam" id="1.10.287.70:FF:000074">
    <property type="entry name" value="Transient receptor potential cation channel subfamily V member 1"/>
    <property type="match status" value="1"/>
</dbReference>
<dbReference type="FunFam" id="1.25.40.20:FF:000018">
    <property type="entry name" value="Transient receptor potential cation channel subfamily V member 1"/>
    <property type="match status" value="1"/>
</dbReference>
<dbReference type="Gene3D" id="1.10.287.70">
    <property type="match status" value="1"/>
</dbReference>
<dbReference type="Gene3D" id="1.25.40.20">
    <property type="entry name" value="Ankyrin repeat-containing domain"/>
    <property type="match status" value="1"/>
</dbReference>
<dbReference type="InterPro" id="IPR002110">
    <property type="entry name" value="Ankyrin_rpt"/>
</dbReference>
<dbReference type="InterPro" id="IPR036770">
    <property type="entry name" value="Ankyrin_rpt-contain_sf"/>
</dbReference>
<dbReference type="InterPro" id="IPR005821">
    <property type="entry name" value="Ion_trans_dom"/>
</dbReference>
<dbReference type="InterPro" id="IPR024862">
    <property type="entry name" value="TRPV"/>
</dbReference>
<dbReference type="InterPro" id="IPR008347">
    <property type="entry name" value="TrpV1-4"/>
</dbReference>
<dbReference type="InterPro" id="IPR008348">
    <property type="entry name" value="TrpV4"/>
</dbReference>
<dbReference type="NCBIfam" id="TIGR00870">
    <property type="entry name" value="trp"/>
    <property type="match status" value="1"/>
</dbReference>
<dbReference type="PANTHER" id="PTHR10582:SF4">
    <property type="entry name" value="TRANSIENT RECEPTOR POTENTIAL CATION CHANNEL SUBFAMILY V MEMBER 4"/>
    <property type="match status" value="1"/>
</dbReference>
<dbReference type="PANTHER" id="PTHR10582">
    <property type="entry name" value="TRANSIENT RECEPTOR POTENTIAL ION CHANNEL PROTEIN"/>
    <property type="match status" value="1"/>
</dbReference>
<dbReference type="Pfam" id="PF00023">
    <property type="entry name" value="Ank"/>
    <property type="match status" value="1"/>
</dbReference>
<dbReference type="Pfam" id="PF00520">
    <property type="entry name" value="Ion_trans"/>
    <property type="match status" value="1"/>
</dbReference>
<dbReference type="PRINTS" id="PR01768">
    <property type="entry name" value="TRPVRECEPTOR"/>
</dbReference>
<dbReference type="PRINTS" id="PR01769">
    <property type="entry name" value="VRL2RECEPTOR"/>
</dbReference>
<dbReference type="SMART" id="SM00248">
    <property type="entry name" value="ANK"/>
    <property type="match status" value="3"/>
</dbReference>
<dbReference type="SUPFAM" id="SSF48403">
    <property type="entry name" value="Ankyrin repeat"/>
    <property type="match status" value="1"/>
</dbReference>
<dbReference type="PROSITE" id="PS50297">
    <property type="entry name" value="ANK_REP_REGION"/>
    <property type="match status" value="1"/>
</dbReference>
<dbReference type="PROSITE" id="PS50088">
    <property type="entry name" value="ANK_REPEAT"/>
    <property type="match status" value="1"/>
</dbReference>
<sequence>MADPGDGPRAAPGDVAEPPGDESGTSGGEAFPLSSLANLFEGEEGSSSLSPVDASRPAGPGDGRPNLRMKFQGAFRKGVPNPIDLLESTLYESSVVPGPKKAPMDSLFDYGTYRHHPSDNKRWRRKVVEKQPQSPKAPAPQPPPILKVFNRPILFDIVSRGSTADLDGLLSYLLTHKKRLTDEEFREPSTGKTCLPKALLNLSNGRNDTIPVLLDIAERTGNMREFINSPFRDIYYRGQTALHIAIERRCKHYVELLVAQGADVHAQARGRFFQPKDEGGYFYFGELPLSLAACTNQPHIVNYLTENPHKKADMRRQDSRGNTVLHALVAIADNTRENTKFVTKMYDLLLLKCSRLFPDSNLETVLNNDGLSPLMMAAKTGKIGVFQHIIRREVTDEDTRHLSRKFKDWAYGPVYSSLYDLSSLDTCGEEVSVLEILVYNSKIENRHEMLAVEPINELLRDKWRKFGAVSFYINVVSYLCAMVIFTLTAYYQPLEGTPPYPYRTTVDYLRLAGEVITLLTGVLFFFTSIKDLFMKKCPGVNSLFVDGSFQLLYFIYSVLVVVSAALYLAGIEAYLAVMVFALVLGWMNALYFTRGLKLTGTYSIMIQKILFKDLFRFLLVYLLFMIGYASALVTLLNPCTNMKVCNEDQSNCTVPSYPACRDSETFSAFLLDLFKLTIGMGDLEMLSSAKYPVVFILLLVTYIILTFVLLLNMLIALMGETVGQVSKESKHIWKLQWATTILDIERSFPVFLRKAFRSGEMVTVGKSSDGTPDRRWCFRVDEVNWSHWNQNLGIINEDPGKSEIYQYYGFSHTMGRLRRDRWSSVVPRVVELNKNSGTDEVVVPLDNLGNPNCDGHQQGYAPKWRAEDAPL</sequence>
<reference key="1">
    <citation type="journal article" date="2000" name="Cell">
        <title>Vanilloid receptor-related osmotically activated channel (VR-OAC), a candidate vertebrate osmoreceptor.</title>
        <authorList>
            <person name="Liedtke W.B."/>
            <person name="Choe Y."/>
            <person name="Marti-Renom M.A."/>
            <person name="Bell A.M."/>
            <person name="Denis C.S."/>
            <person name="Sali A."/>
            <person name="Hudspeth A.J."/>
            <person name="Friedman J.M."/>
            <person name="Heller S."/>
        </authorList>
    </citation>
    <scope>NUCLEOTIDE SEQUENCE [MRNA]</scope>
    <scope>FUNCTION</scope>
    <scope>TRANSPORTER ACTIVITY</scope>
    <scope>SUBCELLULAR LOCATION</scope>
    <scope>TISSUE SPECIFICITY</scope>
    <source>
        <tissue>Kidney</tissue>
    </source>
</reference>
<reference key="2">
    <citation type="journal article" date="2006" name="J. Biol. Chem.">
        <title>PACSINs bind to the TRPV4 cation channel. PACSIN 3 modulates the subcellular localization of TRPV4.</title>
        <authorList>
            <person name="Cuajungco M.P."/>
            <person name="Grimm C."/>
            <person name="Oshima K."/>
            <person name="D'hoedt D."/>
            <person name="Nilius B."/>
            <person name="Mensenkamp A.R."/>
            <person name="Bindels R.J."/>
            <person name="Plomann M."/>
            <person name="Heller S."/>
        </authorList>
    </citation>
    <scope>INTERACTION WITH PACSIN1; PACSIN2 AND PACSIN3</scope>
</reference>
<name>TRPV4_RAT</name>
<protein>
    <recommendedName>
        <fullName>Transient receptor potential cation channel subfamily V member 4</fullName>
        <shortName>TrpV4</shortName>
    </recommendedName>
    <alternativeName>
        <fullName>Osm-9-like TRP channel 4</fullName>
        <shortName>OTRPC4</shortName>
    </alternativeName>
    <alternativeName>
        <fullName evidence="9">Vanilloid receptor-related osmotically-activated channel</fullName>
        <shortName evidence="9">VR-OAC</shortName>
    </alternativeName>
</protein>
<feature type="chain" id="PRO_0000215349" description="Transient receptor potential cation channel subfamily V member 4">
    <location>
        <begin position="1"/>
        <end position="871"/>
    </location>
</feature>
<feature type="topological domain" description="Cytoplasmic" evidence="2">
    <location>
        <begin position="1"/>
        <end position="469"/>
    </location>
</feature>
<feature type="transmembrane region" description="Helical" evidence="2">
    <location>
        <begin position="470"/>
        <end position="490"/>
    </location>
</feature>
<feature type="topological domain" description="Extracellular" evidence="2">
    <location>
        <begin position="491"/>
        <end position="507"/>
    </location>
</feature>
<feature type="transmembrane region" description="Helical" evidence="2">
    <location>
        <begin position="508"/>
        <end position="534"/>
    </location>
</feature>
<feature type="topological domain" description="Cytoplasmic" evidence="2">
    <location>
        <begin position="535"/>
        <end position="547"/>
    </location>
</feature>
<feature type="transmembrane region" description="Helical" evidence="2">
    <location>
        <begin position="548"/>
        <end position="568"/>
    </location>
</feature>
<feature type="topological domain" description="Extracellular" evidence="2">
    <location>
        <begin position="569"/>
        <end position="572"/>
    </location>
</feature>
<feature type="transmembrane region" description="Helical" evidence="2">
    <location>
        <begin position="573"/>
        <end position="593"/>
    </location>
</feature>
<feature type="topological domain" description="Cytoplasmic" evidence="2">
    <location>
        <begin position="594"/>
        <end position="608"/>
    </location>
</feature>
<feature type="transmembrane region" description="Helical" evidence="2">
    <location>
        <begin position="609"/>
        <end position="636"/>
    </location>
</feature>
<feature type="topological domain" description="Extracellular" evidence="2">
    <location>
        <begin position="637"/>
        <end position="665"/>
    </location>
</feature>
<feature type="intramembrane region" description="Pore-forming" evidence="2">
    <location>
        <begin position="666"/>
        <end position="685"/>
    </location>
</feature>
<feature type="topological domain" description="Extracellular" evidence="2">
    <location>
        <begin position="686"/>
        <end position="693"/>
    </location>
</feature>
<feature type="transmembrane region" description="Helical" evidence="2">
    <location>
        <begin position="694"/>
        <end position="722"/>
    </location>
</feature>
<feature type="topological domain" description="Cytoplasmic" evidence="2">
    <location>
        <begin position="723"/>
        <end position="871"/>
    </location>
</feature>
<feature type="repeat" description="ANK 1">
    <location>
        <begin position="237"/>
        <end position="266"/>
    </location>
</feature>
<feature type="repeat" description="ANK 2">
    <location>
        <begin position="284"/>
        <end position="313"/>
    </location>
</feature>
<feature type="repeat" description="ANK 3">
    <location>
        <begin position="369"/>
        <end position="398"/>
    </location>
</feature>
<feature type="region of interest" description="Disordered" evidence="6">
    <location>
        <begin position="1"/>
        <end position="68"/>
    </location>
</feature>
<feature type="region of interest" description="Disordered" evidence="6">
    <location>
        <begin position="110"/>
        <end position="143"/>
    </location>
</feature>
<feature type="region of interest" description="Interaction with calmodulin and ITPR3" evidence="4">
    <location>
        <begin position="812"/>
        <end position="831"/>
    </location>
</feature>
<feature type="short sequence motif" description="Selectivity filter" evidence="2">
    <location>
        <begin position="679"/>
        <end position="682"/>
    </location>
</feature>
<feature type="compositionally biased region" description="Basic and acidic residues" evidence="6">
    <location>
        <begin position="116"/>
        <end position="129"/>
    </location>
</feature>
<feature type="binding site" evidence="4">
    <location>
        <position position="192"/>
    </location>
    <ligand>
        <name>ATP</name>
        <dbReference type="ChEBI" id="CHEBI:30616"/>
    </ligand>
</feature>
<feature type="binding site" evidence="4">
    <location>
        <position position="197"/>
    </location>
    <ligand>
        <name>ATP</name>
        <dbReference type="ChEBI" id="CHEBI:30616"/>
    </ligand>
</feature>
<feature type="binding site" evidence="4">
    <location>
        <position position="201"/>
    </location>
    <ligand>
        <name>ATP</name>
        <dbReference type="ChEBI" id="CHEBI:30616"/>
    </ligand>
</feature>
<feature type="binding site" evidence="4">
    <location>
        <begin position="236"/>
        <end position="239"/>
    </location>
    <ligand>
        <name>ATP</name>
        <dbReference type="ChEBI" id="CHEBI:30616"/>
    </ligand>
</feature>
<feature type="binding site" evidence="4">
    <location>
        <position position="248"/>
    </location>
    <ligand>
        <name>ATP</name>
        <dbReference type="ChEBI" id="CHEBI:30616"/>
    </ligand>
</feature>
<feature type="binding site" evidence="1">
    <location>
        <begin position="249"/>
        <end position="251"/>
    </location>
    <ligand>
        <name>a 1,2-diacyl-sn-glycero-3-phospho-(1D-myo-inositol-4,5-bisphosphate)</name>
        <dbReference type="ChEBI" id="CHEBI:58456"/>
    </ligand>
</feature>
<feature type="binding site" evidence="1">
    <location>
        <begin position="296"/>
        <end position="299"/>
    </location>
    <ligand>
        <name>a 1,2-diacyl-sn-glycero-3-phospho-(1D-myo-inositol-4,5-bisphosphate)</name>
        <dbReference type="ChEBI" id="CHEBI:58456"/>
    </ligand>
</feature>
<feature type="binding site" evidence="1">
    <location>
        <position position="344"/>
    </location>
    <ligand>
        <name>a 1,2-diacyl-sn-glycero-3-phospho-(1D-myo-inositol-4,5-bisphosphate)</name>
        <dbReference type="ChEBI" id="CHEBI:58456"/>
    </ligand>
</feature>
<feature type="binding site" evidence="5">
    <location>
        <position position="682"/>
    </location>
    <ligand>
        <name>Ca(2+)</name>
        <dbReference type="ChEBI" id="CHEBI:29108"/>
        <note>ligand shared between two neighboring subunits</note>
    </ligand>
</feature>
<feature type="modified residue" description="Phosphotyrosine" evidence="3">
    <location>
        <position position="110"/>
    </location>
</feature>
<feature type="modified residue" description="Phosphotyrosine" evidence="3">
    <location>
        <position position="253"/>
    </location>
</feature>
<feature type="modified residue" description="Phosphotyrosine" evidence="3">
    <location>
        <position position="805"/>
    </location>
</feature>
<feature type="modified residue" description="Phosphoserine" evidence="3">
    <location>
        <position position="824"/>
    </location>
</feature>
<accession>Q9ERZ8</accession>
<gene>
    <name type="primary">Trpv4</name>
    <name type="synonym">Vroac</name>
</gene>
<keyword id="KW-0040">ANK repeat</keyword>
<keyword id="KW-0067">ATP-binding</keyword>
<keyword id="KW-0106">Calcium</keyword>
<keyword id="KW-0107">Calcium channel</keyword>
<keyword id="KW-0109">Calcium transport</keyword>
<keyword id="KW-0112">Calmodulin-binding</keyword>
<keyword id="KW-0965">Cell junction</keyword>
<keyword id="KW-1003">Cell membrane</keyword>
<keyword id="KW-0966">Cell projection</keyword>
<keyword id="KW-0969">Cilium</keyword>
<keyword id="KW-0325">Glycoprotein</keyword>
<keyword id="KW-0407">Ion channel</keyword>
<keyword id="KW-0406">Ion transport</keyword>
<keyword id="KW-0446">Lipid-binding</keyword>
<keyword id="KW-0472">Membrane</keyword>
<keyword id="KW-0479">Metal-binding</keyword>
<keyword id="KW-0547">Nucleotide-binding</keyword>
<keyword id="KW-0597">Phosphoprotein</keyword>
<keyword id="KW-1185">Reference proteome</keyword>
<keyword id="KW-0677">Repeat</keyword>
<keyword id="KW-0812">Transmembrane</keyword>
<keyword id="KW-1133">Transmembrane helix</keyword>
<keyword id="KW-0813">Transport</keyword>
<organism>
    <name type="scientific">Rattus norvegicus</name>
    <name type="common">Rat</name>
    <dbReference type="NCBI Taxonomy" id="10116"/>
    <lineage>
        <taxon>Eukaryota</taxon>
        <taxon>Metazoa</taxon>
        <taxon>Chordata</taxon>
        <taxon>Craniata</taxon>
        <taxon>Vertebrata</taxon>
        <taxon>Euteleostomi</taxon>
        <taxon>Mammalia</taxon>
        <taxon>Eutheria</taxon>
        <taxon>Euarchontoglires</taxon>
        <taxon>Glires</taxon>
        <taxon>Rodentia</taxon>
        <taxon>Myomorpha</taxon>
        <taxon>Muroidea</taxon>
        <taxon>Muridae</taxon>
        <taxon>Murinae</taxon>
        <taxon>Rattus</taxon>
    </lineage>
</organism>